<feature type="chain" id="PRO_1000050637" description="Small ribosomal subunit protein eS6">
    <location>
        <begin position="1"/>
        <end position="124"/>
    </location>
</feature>
<evidence type="ECO:0000255" key="1">
    <source>
        <dbReference type="HAMAP-Rule" id="MF_00512"/>
    </source>
</evidence>
<evidence type="ECO:0000305" key="2"/>
<sequence length="124" mass="13483">MAFKVVVSDTKTGKSYQFETESTALIGKKIGDEISGSVVELEGYKLKITGGSDKCGFAMRHDIHGAMKMRVLLKEGPGYNVKEKGLRRRKSLRGNTISKDVTLINTKVVEYGSAPLGGEPESTE</sequence>
<comment type="similarity">
    <text evidence="1">Belongs to the eukaryotic ribosomal protein eS6 family.</text>
</comment>
<keyword id="KW-0687">Ribonucleoprotein</keyword>
<keyword id="KW-0689">Ribosomal protein</keyword>
<proteinExistence type="inferred from homology"/>
<reference key="1">
    <citation type="submission" date="2007-06" db="EMBL/GenBank/DDBJ databases">
        <title>Complete sequence of Methanococcus maripaludis C7.</title>
        <authorList>
            <consortium name="US DOE Joint Genome Institute"/>
            <person name="Copeland A."/>
            <person name="Lucas S."/>
            <person name="Lapidus A."/>
            <person name="Barry K."/>
            <person name="Glavina del Rio T."/>
            <person name="Dalin E."/>
            <person name="Tice H."/>
            <person name="Pitluck S."/>
            <person name="Clum A."/>
            <person name="Schmutz J."/>
            <person name="Larimer F."/>
            <person name="Land M."/>
            <person name="Hauser L."/>
            <person name="Kyrpides N."/>
            <person name="Anderson I."/>
            <person name="Sieprawska-Lupa M."/>
            <person name="Whitman W.B."/>
            <person name="Richardson P."/>
        </authorList>
    </citation>
    <scope>NUCLEOTIDE SEQUENCE [LARGE SCALE GENOMIC DNA]</scope>
    <source>
        <strain>C7 / ATCC BAA-1331</strain>
    </source>
</reference>
<gene>
    <name evidence="1" type="primary">rps6e</name>
    <name type="ordered locus">MmarC7_0454</name>
</gene>
<accession>A6VGE7</accession>
<protein>
    <recommendedName>
        <fullName evidence="1">Small ribosomal subunit protein eS6</fullName>
    </recommendedName>
    <alternativeName>
        <fullName evidence="2">30S ribosomal protein S6e</fullName>
    </alternativeName>
</protein>
<organism>
    <name type="scientific">Methanococcus maripaludis (strain C7 / ATCC BAA-1331)</name>
    <dbReference type="NCBI Taxonomy" id="426368"/>
    <lineage>
        <taxon>Archaea</taxon>
        <taxon>Methanobacteriati</taxon>
        <taxon>Methanobacteriota</taxon>
        <taxon>Methanomada group</taxon>
        <taxon>Methanococci</taxon>
        <taxon>Methanococcales</taxon>
        <taxon>Methanococcaceae</taxon>
        <taxon>Methanococcus</taxon>
    </lineage>
</organism>
<dbReference type="EMBL" id="CP000745">
    <property type="protein sequence ID" value="ABR65523.1"/>
    <property type="molecule type" value="Genomic_DNA"/>
</dbReference>
<dbReference type="SMR" id="A6VGE7"/>
<dbReference type="STRING" id="426368.MmarC7_0454"/>
<dbReference type="KEGG" id="mmz:MmarC7_0454"/>
<dbReference type="eggNOG" id="arCOG01946">
    <property type="taxonomic scope" value="Archaea"/>
</dbReference>
<dbReference type="HOGENOM" id="CLU_109671_1_1_2"/>
<dbReference type="OrthoDB" id="7793at2157"/>
<dbReference type="GO" id="GO:1990904">
    <property type="term" value="C:ribonucleoprotein complex"/>
    <property type="evidence" value="ECO:0007669"/>
    <property type="project" value="UniProtKB-KW"/>
</dbReference>
<dbReference type="GO" id="GO:0005840">
    <property type="term" value="C:ribosome"/>
    <property type="evidence" value="ECO:0007669"/>
    <property type="project" value="UniProtKB-KW"/>
</dbReference>
<dbReference type="GO" id="GO:0003735">
    <property type="term" value="F:structural constituent of ribosome"/>
    <property type="evidence" value="ECO:0007669"/>
    <property type="project" value="InterPro"/>
</dbReference>
<dbReference type="GO" id="GO:0006412">
    <property type="term" value="P:translation"/>
    <property type="evidence" value="ECO:0007669"/>
    <property type="project" value="UniProtKB-UniRule"/>
</dbReference>
<dbReference type="HAMAP" id="MF_00512">
    <property type="entry name" value="Ribosomal_eS6"/>
    <property type="match status" value="1"/>
</dbReference>
<dbReference type="InterPro" id="IPR001377">
    <property type="entry name" value="Ribosomal_eS6"/>
</dbReference>
<dbReference type="InterPro" id="IPR020924">
    <property type="entry name" value="Ribosomal_eS6_arc"/>
</dbReference>
<dbReference type="NCBIfam" id="NF003294">
    <property type="entry name" value="PRK04290.1-3"/>
    <property type="match status" value="1"/>
</dbReference>
<dbReference type="PANTHER" id="PTHR11502">
    <property type="entry name" value="40S RIBOSOMAL PROTEIN S6"/>
    <property type="match status" value="1"/>
</dbReference>
<dbReference type="Pfam" id="PF01092">
    <property type="entry name" value="Ribosomal_S6e"/>
    <property type="match status" value="1"/>
</dbReference>
<dbReference type="SMART" id="SM01405">
    <property type="entry name" value="Ribosomal_S6e"/>
    <property type="match status" value="1"/>
</dbReference>
<name>RS6E_METM7</name>